<comment type="function">
    <text evidence="1">Involved in mRNA degradation. Catalyzes the phosphorolysis of single-stranded polyribonucleotides processively in the 3'- to 5'-direction.</text>
</comment>
<comment type="catalytic activity">
    <reaction evidence="1">
        <text>RNA(n+1) + phosphate = RNA(n) + a ribonucleoside 5'-diphosphate</text>
        <dbReference type="Rhea" id="RHEA:22096"/>
        <dbReference type="Rhea" id="RHEA-COMP:14527"/>
        <dbReference type="Rhea" id="RHEA-COMP:17342"/>
        <dbReference type="ChEBI" id="CHEBI:43474"/>
        <dbReference type="ChEBI" id="CHEBI:57930"/>
        <dbReference type="ChEBI" id="CHEBI:140395"/>
        <dbReference type="EC" id="2.7.7.8"/>
    </reaction>
</comment>
<comment type="cofactor">
    <cofactor evidence="1">
        <name>Mg(2+)</name>
        <dbReference type="ChEBI" id="CHEBI:18420"/>
    </cofactor>
</comment>
<comment type="subunit">
    <text evidence="1">Component of the RNA degradosome, which is a multiprotein complex involved in RNA processing and mRNA degradation.</text>
</comment>
<comment type="subcellular location">
    <subcellularLocation>
        <location evidence="1">Cytoplasm</location>
    </subcellularLocation>
</comment>
<comment type="similarity">
    <text evidence="1">Belongs to the polyribonucleotide nucleotidyltransferase family.</text>
</comment>
<sequence length="699" mass="75538">MNPIVKSFEYGQHTVTLETGVIARQADAAVLASMGDTTVLVTVVGKKEAEAGRDFFPLTVNYQEKTYAAGKIPGGFFKREGRPSEEETLIARLIDRPIRPLFPNGFKNEVQVIITVVSVDPEIEPDIISMIGTSAALAISGIPFNGPLGAARVGYINGEYVLNPTVKQIGASQLNLVVAGTESAVLMVESEAQALPEEVMLGSVVYGHDQQQVVIKAIAEFKAEAGKPTWDWTAPVEDEALVAQIKELAEAGFIEAYQIQVKQERYAQVAVVKAAAKEALLAANPDVDLREVDNLLGSLEKKVVRGRILRGMPRIDGREPDMVRALSVLAGVLPRTHGSALFTRGETQALVTCTLGTERDAQKIDSIMGERTNRFMLHYNFPPYSVGETGMVGSPKRREIGHGKLAWRGINAVMPSAEEFPYSVRVVSEITESNGSSSMASVCGTSLALMDAGVPIKTSVAGIAMGLVKEGDDFVVLSDILGDEDHLGDMDFKVAGTRDGVTALQMDIKIEGITKEIMEIALQQAYGARVHILNVMDQAIGSHRADISDHAPRITTIKINPEKIRDVIGKGGAVIRALTEETGTTIELEDDGTVKIASSNGEATKEAIRRIEEITSEVEVGRIYNGKVIRIVDFGAFVNILPGKDGLVHISQISDERVANVSDHLELNQEVTVKVMEVDRQGRVRLSIKEAQTKEPAAE</sequence>
<organism>
    <name type="scientific">Shewanella oneidensis (strain ATCC 700550 / JCM 31522 / CIP 106686 / LMG 19005 / NCIMB 14063 / MR-1)</name>
    <dbReference type="NCBI Taxonomy" id="211586"/>
    <lineage>
        <taxon>Bacteria</taxon>
        <taxon>Pseudomonadati</taxon>
        <taxon>Pseudomonadota</taxon>
        <taxon>Gammaproteobacteria</taxon>
        <taxon>Alteromonadales</taxon>
        <taxon>Shewanellaceae</taxon>
        <taxon>Shewanella</taxon>
    </lineage>
</organism>
<reference key="1">
    <citation type="journal article" date="2002" name="Nat. Biotechnol.">
        <title>Genome sequence of the dissimilatory metal ion-reducing bacterium Shewanella oneidensis.</title>
        <authorList>
            <person name="Heidelberg J.F."/>
            <person name="Paulsen I.T."/>
            <person name="Nelson K.E."/>
            <person name="Gaidos E.J."/>
            <person name="Nelson W.C."/>
            <person name="Read T.D."/>
            <person name="Eisen J.A."/>
            <person name="Seshadri R."/>
            <person name="Ward N.L."/>
            <person name="Methe B.A."/>
            <person name="Clayton R.A."/>
            <person name="Meyer T."/>
            <person name="Tsapin A."/>
            <person name="Scott J."/>
            <person name="Beanan M.J."/>
            <person name="Brinkac L.M."/>
            <person name="Daugherty S.C."/>
            <person name="DeBoy R.T."/>
            <person name="Dodson R.J."/>
            <person name="Durkin A.S."/>
            <person name="Haft D.H."/>
            <person name="Kolonay J.F."/>
            <person name="Madupu R."/>
            <person name="Peterson J.D."/>
            <person name="Umayam L.A."/>
            <person name="White O."/>
            <person name="Wolf A.M."/>
            <person name="Vamathevan J.J."/>
            <person name="Weidman J.F."/>
            <person name="Impraim M."/>
            <person name="Lee K."/>
            <person name="Berry K.J."/>
            <person name="Lee C."/>
            <person name="Mueller J."/>
            <person name="Khouri H.M."/>
            <person name="Gill J."/>
            <person name="Utterback T.R."/>
            <person name="McDonald L.A."/>
            <person name="Feldblyum T.V."/>
            <person name="Smith H.O."/>
            <person name="Venter J.C."/>
            <person name="Nealson K.H."/>
            <person name="Fraser C.M."/>
        </authorList>
    </citation>
    <scope>NUCLEOTIDE SEQUENCE [LARGE SCALE GENOMIC DNA]</scope>
    <source>
        <strain>ATCC 700550 / JCM 31522 / CIP 106686 / LMG 19005 / NCIMB 14063 / MR-1</strain>
    </source>
</reference>
<keyword id="KW-0963">Cytoplasm</keyword>
<keyword id="KW-0460">Magnesium</keyword>
<keyword id="KW-0479">Metal-binding</keyword>
<keyword id="KW-0548">Nucleotidyltransferase</keyword>
<keyword id="KW-1185">Reference proteome</keyword>
<keyword id="KW-0694">RNA-binding</keyword>
<keyword id="KW-0808">Transferase</keyword>
<protein>
    <recommendedName>
        <fullName evidence="1">Polyribonucleotide nucleotidyltransferase</fullName>
        <ecNumber evidence="1">2.7.7.8</ecNumber>
    </recommendedName>
    <alternativeName>
        <fullName evidence="1">Polynucleotide phosphorylase</fullName>
        <shortName evidence="1">PNPase</shortName>
    </alternativeName>
</protein>
<accession>Q8EHL1</accession>
<feature type="chain" id="PRO_0000329842" description="Polyribonucleotide nucleotidyltransferase">
    <location>
        <begin position="1"/>
        <end position="699"/>
    </location>
</feature>
<feature type="domain" description="KH" evidence="1">
    <location>
        <begin position="552"/>
        <end position="611"/>
    </location>
</feature>
<feature type="domain" description="S1 motif" evidence="1">
    <location>
        <begin position="621"/>
        <end position="689"/>
    </location>
</feature>
<feature type="binding site" evidence="1">
    <location>
        <position position="485"/>
    </location>
    <ligand>
        <name>Mg(2+)</name>
        <dbReference type="ChEBI" id="CHEBI:18420"/>
    </ligand>
</feature>
<feature type="binding site" evidence="1">
    <location>
        <position position="491"/>
    </location>
    <ligand>
        <name>Mg(2+)</name>
        <dbReference type="ChEBI" id="CHEBI:18420"/>
    </ligand>
</feature>
<gene>
    <name evidence="1" type="primary">pnp</name>
    <name type="ordered locus">SO_1209</name>
</gene>
<dbReference type="EC" id="2.7.7.8" evidence="1"/>
<dbReference type="EMBL" id="AE014299">
    <property type="protein sequence ID" value="AAN54278.2"/>
    <property type="molecule type" value="Genomic_DNA"/>
</dbReference>
<dbReference type="RefSeq" id="NP_716833.2">
    <property type="nucleotide sequence ID" value="NC_004347.2"/>
</dbReference>
<dbReference type="RefSeq" id="WP_011071439.1">
    <property type="nucleotide sequence ID" value="NC_004347.2"/>
</dbReference>
<dbReference type="SMR" id="Q8EHL1"/>
<dbReference type="STRING" id="211586.SO_1209"/>
<dbReference type="PaxDb" id="211586-SO_1209"/>
<dbReference type="KEGG" id="son:SO_1209"/>
<dbReference type="PATRIC" id="fig|211586.12.peg.1161"/>
<dbReference type="eggNOG" id="COG1185">
    <property type="taxonomic scope" value="Bacteria"/>
</dbReference>
<dbReference type="HOGENOM" id="CLU_004217_2_2_6"/>
<dbReference type="OrthoDB" id="9804305at2"/>
<dbReference type="PhylomeDB" id="Q8EHL1"/>
<dbReference type="BioCyc" id="SONE211586:G1GMP-1121-MONOMER"/>
<dbReference type="Proteomes" id="UP000008186">
    <property type="component" value="Chromosome"/>
</dbReference>
<dbReference type="GO" id="GO:0005829">
    <property type="term" value="C:cytosol"/>
    <property type="evidence" value="ECO:0000318"/>
    <property type="project" value="GO_Central"/>
</dbReference>
<dbReference type="GO" id="GO:0000175">
    <property type="term" value="F:3'-5'-RNA exonuclease activity"/>
    <property type="evidence" value="ECO:0000318"/>
    <property type="project" value="GO_Central"/>
</dbReference>
<dbReference type="GO" id="GO:0000287">
    <property type="term" value="F:magnesium ion binding"/>
    <property type="evidence" value="ECO:0007669"/>
    <property type="project" value="UniProtKB-UniRule"/>
</dbReference>
<dbReference type="GO" id="GO:0004654">
    <property type="term" value="F:polyribonucleotide nucleotidyltransferase activity"/>
    <property type="evidence" value="ECO:0000318"/>
    <property type="project" value="GO_Central"/>
</dbReference>
<dbReference type="GO" id="GO:0003723">
    <property type="term" value="F:RNA binding"/>
    <property type="evidence" value="ECO:0007669"/>
    <property type="project" value="UniProtKB-UniRule"/>
</dbReference>
<dbReference type="GO" id="GO:0006402">
    <property type="term" value="P:mRNA catabolic process"/>
    <property type="evidence" value="ECO:0007669"/>
    <property type="project" value="UniProtKB-UniRule"/>
</dbReference>
<dbReference type="GO" id="GO:0006401">
    <property type="term" value="P:RNA catabolic process"/>
    <property type="evidence" value="ECO:0000318"/>
    <property type="project" value="GO_Central"/>
</dbReference>
<dbReference type="GO" id="GO:0006396">
    <property type="term" value="P:RNA processing"/>
    <property type="evidence" value="ECO:0007669"/>
    <property type="project" value="InterPro"/>
</dbReference>
<dbReference type="CDD" id="cd02393">
    <property type="entry name" value="KH-I_PNPase"/>
    <property type="match status" value="1"/>
</dbReference>
<dbReference type="CDD" id="cd11363">
    <property type="entry name" value="RNase_PH_PNPase_1"/>
    <property type="match status" value="1"/>
</dbReference>
<dbReference type="CDD" id="cd11364">
    <property type="entry name" value="RNase_PH_PNPase_2"/>
    <property type="match status" value="1"/>
</dbReference>
<dbReference type="CDD" id="cd04472">
    <property type="entry name" value="S1_PNPase"/>
    <property type="match status" value="1"/>
</dbReference>
<dbReference type="FunFam" id="2.40.50.140:FF:000023">
    <property type="entry name" value="Polyribonucleotide nucleotidyltransferase"/>
    <property type="match status" value="1"/>
</dbReference>
<dbReference type="FunFam" id="3.30.1370.10:FF:000001">
    <property type="entry name" value="Polyribonucleotide nucleotidyltransferase"/>
    <property type="match status" value="1"/>
</dbReference>
<dbReference type="FunFam" id="3.30.230.70:FF:000001">
    <property type="entry name" value="Polyribonucleotide nucleotidyltransferase"/>
    <property type="match status" value="1"/>
</dbReference>
<dbReference type="FunFam" id="3.30.230.70:FF:000002">
    <property type="entry name" value="Polyribonucleotide nucleotidyltransferase"/>
    <property type="match status" value="1"/>
</dbReference>
<dbReference type="Gene3D" id="3.30.230.70">
    <property type="entry name" value="GHMP Kinase, N-terminal domain"/>
    <property type="match status" value="2"/>
</dbReference>
<dbReference type="Gene3D" id="3.30.1370.10">
    <property type="entry name" value="K Homology domain, type 1"/>
    <property type="match status" value="1"/>
</dbReference>
<dbReference type="Gene3D" id="2.40.50.140">
    <property type="entry name" value="Nucleic acid-binding proteins"/>
    <property type="match status" value="1"/>
</dbReference>
<dbReference type="HAMAP" id="MF_01595">
    <property type="entry name" value="PNPase"/>
    <property type="match status" value="1"/>
</dbReference>
<dbReference type="InterPro" id="IPR001247">
    <property type="entry name" value="ExoRNase_PH_dom1"/>
</dbReference>
<dbReference type="InterPro" id="IPR015847">
    <property type="entry name" value="ExoRNase_PH_dom2"/>
</dbReference>
<dbReference type="InterPro" id="IPR036345">
    <property type="entry name" value="ExoRNase_PH_dom2_sf"/>
</dbReference>
<dbReference type="InterPro" id="IPR004087">
    <property type="entry name" value="KH_dom"/>
</dbReference>
<dbReference type="InterPro" id="IPR004088">
    <property type="entry name" value="KH_dom_type_1"/>
</dbReference>
<dbReference type="InterPro" id="IPR036612">
    <property type="entry name" value="KH_dom_type_1_sf"/>
</dbReference>
<dbReference type="InterPro" id="IPR012340">
    <property type="entry name" value="NA-bd_OB-fold"/>
</dbReference>
<dbReference type="InterPro" id="IPR012162">
    <property type="entry name" value="PNPase"/>
</dbReference>
<dbReference type="InterPro" id="IPR027408">
    <property type="entry name" value="PNPase/RNase_PH_dom_sf"/>
</dbReference>
<dbReference type="InterPro" id="IPR015848">
    <property type="entry name" value="PNPase_PH_RNA-bd_bac/org-type"/>
</dbReference>
<dbReference type="InterPro" id="IPR036456">
    <property type="entry name" value="PNPase_PH_RNA-bd_sf"/>
</dbReference>
<dbReference type="InterPro" id="IPR020568">
    <property type="entry name" value="Ribosomal_Su5_D2-typ_SF"/>
</dbReference>
<dbReference type="InterPro" id="IPR003029">
    <property type="entry name" value="S1_domain"/>
</dbReference>
<dbReference type="NCBIfam" id="TIGR03591">
    <property type="entry name" value="polynuc_phos"/>
    <property type="match status" value="1"/>
</dbReference>
<dbReference type="NCBIfam" id="NF008805">
    <property type="entry name" value="PRK11824.1"/>
    <property type="match status" value="1"/>
</dbReference>
<dbReference type="PANTHER" id="PTHR11252">
    <property type="entry name" value="POLYRIBONUCLEOTIDE NUCLEOTIDYLTRANSFERASE"/>
    <property type="match status" value="1"/>
</dbReference>
<dbReference type="PANTHER" id="PTHR11252:SF0">
    <property type="entry name" value="POLYRIBONUCLEOTIDE NUCLEOTIDYLTRANSFERASE 1, MITOCHONDRIAL"/>
    <property type="match status" value="1"/>
</dbReference>
<dbReference type="Pfam" id="PF00013">
    <property type="entry name" value="KH_1"/>
    <property type="match status" value="1"/>
</dbReference>
<dbReference type="Pfam" id="PF03726">
    <property type="entry name" value="PNPase"/>
    <property type="match status" value="1"/>
</dbReference>
<dbReference type="Pfam" id="PF01138">
    <property type="entry name" value="RNase_PH"/>
    <property type="match status" value="2"/>
</dbReference>
<dbReference type="Pfam" id="PF03725">
    <property type="entry name" value="RNase_PH_C"/>
    <property type="match status" value="2"/>
</dbReference>
<dbReference type="Pfam" id="PF00575">
    <property type="entry name" value="S1"/>
    <property type="match status" value="1"/>
</dbReference>
<dbReference type="PIRSF" id="PIRSF005499">
    <property type="entry name" value="PNPase"/>
    <property type="match status" value="1"/>
</dbReference>
<dbReference type="SMART" id="SM00322">
    <property type="entry name" value="KH"/>
    <property type="match status" value="1"/>
</dbReference>
<dbReference type="SMART" id="SM00316">
    <property type="entry name" value="S1"/>
    <property type="match status" value="1"/>
</dbReference>
<dbReference type="SUPFAM" id="SSF54791">
    <property type="entry name" value="Eukaryotic type KH-domain (KH-domain type I)"/>
    <property type="match status" value="1"/>
</dbReference>
<dbReference type="SUPFAM" id="SSF50249">
    <property type="entry name" value="Nucleic acid-binding proteins"/>
    <property type="match status" value="1"/>
</dbReference>
<dbReference type="SUPFAM" id="SSF46915">
    <property type="entry name" value="Polynucleotide phosphorylase/guanosine pentaphosphate synthase (PNPase/GPSI), domain 3"/>
    <property type="match status" value="1"/>
</dbReference>
<dbReference type="SUPFAM" id="SSF55666">
    <property type="entry name" value="Ribonuclease PH domain 2-like"/>
    <property type="match status" value="2"/>
</dbReference>
<dbReference type="SUPFAM" id="SSF54211">
    <property type="entry name" value="Ribosomal protein S5 domain 2-like"/>
    <property type="match status" value="2"/>
</dbReference>
<dbReference type="PROSITE" id="PS50084">
    <property type="entry name" value="KH_TYPE_1"/>
    <property type="match status" value="1"/>
</dbReference>
<dbReference type="PROSITE" id="PS50126">
    <property type="entry name" value="S1"/>
    <property type="match status" value="1"/>
</dbReference>
<name>PNP_SHEON</name>
<evidence type="ECO:0000255" key="1">
    <source>
        <dbReference type="HAMAP-Rule" id="MF_01595"/>
    </source>
</evidence>
<proteinExistence type="inferred from homology"/>